<sequence>MPKSNDRINLTNQFLIAMPNMADPTFSGTVVYLCDHSERGALGLVINRPTDIDLQALFNRIDLKLEIEPLLHVPVYFGGPVQTERGFVLHDASENTYTSSMQVPGGLEMTTSKDVLEAVASGKGPERFLLTLGHAGWGAGQLEDEISKNGWLTVEADPKIVFDVPAENRFEAALALLGISSSMLSGDAGHA</sequence>
<evidence type="ECO:0000255" key="1">
    <source>
        <dbReference type="HAMAP-Rule" id="MF_00758"/>
    </source>
</evidence>
<organism>
    <name type="scientific">Paraburkholderia phymatum (strain DSM 17167 / CIP 108236 / LMG 21445 / STM815)</name>
    <name type="common">Burkholderia phymatum</name>
    <dbReference type="NCBI Taxonomy" id="391038"/>
    <lineage>
        <taxon>Bacteria</taxon>
        <taxon>Pseudomonadati</taxon>
        <taxon>Pseudomonadota</taxon>
        <taxon>Betaproteobacteria</taxon>
        <taxon>Burkholderiales</taxon>
        <taxon>Burkholderiaceae</taxon>
        <taxon>Paraburkholderia</taxon>
    </lineage>
</organism>
<keyword id="KW-1185">Reference proteome</keyword>
<feature type="chain" id="PRO_1000198259" description="UPF0301 protein Bphy_2327">
    <location>
        <begin position="1"/>
        <end position="191"/>
    </location>
</feature>
<dbReference type="EMBL" id="CP001043">
    <property type="protein sequence ID" value="ACC71502.1"/>
    <property type="molecule type" value="Genomic_DNA"/>
</dbReference>
<dbReference type="RefSeq" id="WP_012401708.1">
    <property type="nucleotide sequence ID" value="NC_010622.1"/>
</dbReference>
<dbReference type="SMR" id="B2JFD4"/>
<dbReference type="STRING" id="391038.Bphy_2327"/>
<dbReference type="KEGG" id="bph:Bphy_2327"/>
<dbReference type="eggNOG" id="COG1678">
    <property type="taxonomic scope" value="Bacteria"/>
</dbReference>
<dbReference type="HOGENOM" id="CLU_057596_1_0_4"/>
<dbReference type="OrthoDB" id="9807486at2"/>
<dbReference type="Proteomes" id="UP000001192">
    <property type="component" value="Chromosome 1"/>
</dbReference>
<dbReference type="GO" id="GO:0005829">
    <property type="term" value="C:cytosol"/>
    <property type="evidence" value="ECO:0007669"/>
    <property type="project" value="TreeGrafter"/>
</dbReference>
<dbReference type="Gene3D" id="3.40.1740.10">
    <property type="entry name" value="VC0467-like"/>
    <property type="match status" value="1"/>
</dbReference>
<dbReference type="HAMAP" id="MF_00758">
    <property type="entry name" value="UPF0301"/>
    <property type="match status" value="1"/>
</dbReference>
<dbReference type="InterPro" id="IPR003774">
    <property type="entry name" value="AlgH-like"/>
</dbReference>
<dbReference type="NCBIfam" id="NF001266">
    <property type="entry name" value="PRK00228.1-1"/>
    <property type="match status" value="1"/>
</dbReference>
<dbReference type="NCBIfam" id="NF001267">
    <property type="entry name" value="PRK00228.1-2"/>
    <property type="match status" value="1"/>
</dbReference>
<dbReference type="PANTHER" id="PTHR30327">
    <property type="entry name" value="UNCHARACTERIZED PROTEIN YQGE"/>
    <property type="match status" value="1"/>
</dbReference>
<dbReference type="PANTHER" id="PTHR30327:SF1">
    <property type="entry name" value="UPF0301 PROTEIN YQGE"/>
    <property type="match status" value="1"/>
</dbReference>
<dbReference type="Pfam" id="PF02622">
    <property type="entry name" value="DUF179"/>
    <property type="match status" value="1"/>
</dbReference>
<dbReference type="SUPFAM" id="SSF143456">
    <property type="entry name" value="VC0467-like"/>
    <property type="match status" value="1"/>
</dbReference>
<gene>
    <name type="ordered locus">Bphy_2327</name>
</gene>
<name>Y2327_PARP8</name>
<protein>
    <recommendedName>
        <fullName evidence="1">UPF0301 protein Bphy_2327</fullName>
    </recommendedName>
</protein>
<accession>B2JFD4</accession>
<proteinExistence type="inferred from homology"/>
<reference key="1">
    <citation type="journal article" date="2014" name="Stand. Genomic Sci.">
        <title>Complete genome sequence of Burkholderia phymatum STM815(T), a broad host range and efficient nitrogen-fixing symbiont of Mimosa species.</title>
        <authorList>
            <person name="Moulin L."/>
            <person name="Klonowska A."/>
            <person name="Caroline B."/>
            <person name="Booth K."/>
            <person name="Vriezen J.A."/>
            <person name="Melkonian R."/>
            <person name="James E.K."/>
            <person name="Young J.P."/>
            <person name="Bena G."/>
            <person name="Hauser L."/>
            <person name="Land M."/>
            <person name="Kyrpides N."/>
            <person name="Bruce D."/>
            <person name="Chain P."/>
            <person name="Copeland A."/>
            <person name="Pitluck S."/>
            <person name="Woyke T."/>
            <person name="Lizotte-Waniewski M."/>
            <person name="Bristow J."/>
            <person name="Riley M."/>
        </authorList>
    </citation>
    <scope>NUCLEOTIDE SEQUENCE [LARGE SCALE GENOMIC DNA]</scope>
    <source>
        <strain>DSM 17167 / CIP 108236 / LMG 21445 / STM815</strain>
    </source>
</reference>
<comment type="similarity">
    <text evidence="1">Belongs to the UPF0301 (AlgH) family.</text>
</comment>